<comment type="function">
    <text evidence="1">Allows the formation of correctly charged Asn-tRNA(Asn) or Gln-tRNA(Gln) through the transamidation of misacylated Asp-tRNA(Asn) or Glu-tRNA(Gln) in organisms which lack either or both of asparaginyl-tRNA or glutaminyl-tRNA synthetases. The reaction takes place in the presence of glutamine and ATP through an activated phospho-Asp-tRNA(Asn) or phospho-Glu-tRNA(Gln).</text>
</comment>
<comment type="catalytic activity">
    <reaction evidence="1">
        <text>L-glutamyl-tRNA(Gln) + L-glutamine + ATP + H2O = L-glutaminyl-tRNA(Gln) + L-glutamate + ADP + phosphate + H(+)</text>
        <dbReference type="Rhea" id="RHEA:17521"/>
        <dbReference type="Rhea" id="RHEA-COMP:9681"/>
        <dbReference type="Rhea" id="RHEA-COMP:9684"/>
        <dbReference type="ChEBI" id="CHEBI:15377"/>
        <dbReference type="ChEBI" id="CHEBI:15378"/>
        <dbReference type="ChEBI" id="CHEBI:29985"/>
        <dbReference type="ChEBI" id="CHEBI:30616"/>
        <dbReference type="ChEBI" id="CHEBI:43474"/>
        <dbReference type="ChEBI" id="CHEBI:58359"/>
        <dbReference type="ChEBI" id="CHEBI:78520"/>
        <dbReference type="ChEBI" id="CHEBI:78521"/>
        <dbReference type="ChEBI" id="CHEBI:456216"/>
    </reaction>
</comment>
<comment type="catalytic activity">
    <reaction evidence="1">
        <text>L-aspartyl-tRNA(Asn) + L-glutamine + ATP + H2O = L-asparaginyl-tRNA(Asn) + L-glutamate + ADP + phosphate + 2 H(+)</text>
        <dbReference type="Rhea" id="RHEA:14513"/>
        <dbReference type="Rhea" id="RHEA-COMP:9674"/>
        <dbReference type="Rhea" id="RHEA-COMP:9677"/>
        <dbReference type="ChEBI" id="CHEBI:15377"/>
        <dbReference type="ChEBI" id="CHEBI:15378"/>
        <dbReference type="ChEBI" id="CHEBI:29985"/>
        <dbReference type="ChEBI" id="CHEBI:30616"/>
        <dbReference type="ChEBI" id="CHEBI:43474"/>
        <dbReference type="ChEBI" id="CHEBI:58359"/>
        <dbReference type="ChEBI" id="CHEBI:78515"/>
        <dbReference type="ChEBI" id="CHEBI:78516"/>
        <dbReference type="ChEBI" id="CHEBI:456216"/>
    </reaction>
</comment>
<comment type="subunit">
    <text evidence="1">Heterotrimer of A, B and C subunits.</text>
</comment>
<comment type="similarity">
    <text evidence="1">Belongs to the GatB/GatE family. GatB subfamily.</text>
</comment>
<organism>
    <name type="scientific">Coprothermobacter proteolyticus (strain ATCC 35245 / DSM 5265 / OCM 4 / BT)</name>
    <dbReference type="NCBI Taxonomy" id="309798"/>
    <lineage>
        <taxon>Bacteria</taxon>
        <taxon>Pseudomonadati</taxon>
        <taxon>Coprothermobacterota</taxon>
        <taxon>Coprothermobacteria</taxon>
        <taxon>Coprothermobacterales</taxon>
        <taxon>Coprothermobacteraceae</taxon>
        <taxon>Coprothermobacter</taxon>
    </lineage>
</organism>
<dbReference type="EC" id="6.3.5.-" evidence="1"/>
<dbReference type="EMBL" id="CP001145">
    <property type="protein sequence ID" value="ACI17034.1"/>
    <property type="molecule type" value="Genomic_DNA"/>
</dbReference>
<dbReference type="RefSeq" id="WP_012543686.1">
    <property type="nucleotide sequence ID" value="NC_011295.1"/>
</dbReference>
<dbReference type="SMR" id="B5Y6U9"/>
<dbReference type="STRING" id="309798.COPRO5265_0125"/>
<dbReference type="KEGG" id="cpo:COPRO5265_0125"/>
<dbReference type="eggNOG" id="COG0064">
    <property type="taxonomic scope" value="Bacteria"/>
</dbReference>
<dbReference type="HOGENOM" id="CLU_019240_0_0_9"/>
<dbReference type="OrthoDB" id="9804078at2"/>
<dbReference type="Proteomes" id="UP000001732">
    <property type="component" value="Chromosome"/>
</dbReference>
<dbReference type="GO" id="GO:0050566">
    <property type="term" value="F:asparaginyl-tRNA synthase (glutamine-hydrolyzing) activity"/>
    <property type="evidence" value="ECO:0007669"/>
    <property type="project" value="RHEA"/>
</dbReference>
<dbReference type="GO" id="GO:0005524">
    <property type="term" value="F:ATP binding"/>
    <property type="evidence" value="ECO:0007669"/>
    <property type="project" value="UniProtKB-KW"/>
</dbReference>
<dbReference type="GO" id="GO:0050567">
    <property type="term" value="F:glutaminyl-tRNA synthase (glutamine-hydrolyzing) activity"/>
    <property type="evidence" value="ECO:0007669"/>
    <property type="project" value="UniProtKB-UniRule"/>
</dbReference>
<dbReference type="GO" id="GO:0006412">
    <property type="term" value="P:translation"/>
    <property type="evidence" value="ECO:0007669"/>
    <property type="project" value="UniProtKB-UniRule"/>
</dbReference>
<dbReference type="FunFam" id="1.10.10.410:FF:000001">
    <property type="entry name" value="Aspartyl/glutamyl-tRNA(Asn/Gln) amidotransferase subunit B"/>
    <property type="match status" value="1"/>
</dbReference>
<dbReference type="Gene3D" id="1.10.10.410">
    <property type="match status" value="1"/>
</dbReference>
<dbReference type="HAMAP" id="MF_00121">
    <property type="entry name" value="GatB"/>
    <property type="match status" value="1"/>
</dbReference>
<dbReference type="InterPro" id="IPR017959">
    <property type="entry name" value="Asn/Gln-tRNA_amidoTrfase_suB/E"/>
</dbReference>
<dbReference type="InterPro" id="IPR006075">
    <property type="entry name" value="Asn/Gln-tRNA_Trfase_suB/E_cat"/>
</dbReference>
<dbReference type="InterPro" id="IPR018027">
    <property type="entry name" value="Asn/Gln_amidotransferase"/>
</dbReference>
<dbReference type="InterPro" id="IPR003789">
    <property type="entry name" value="Asn/Gln_tRNA_amidoTrase-B-like"/>
</dbReference>
<dbReference type="InterPro" id="IPR004413">
    <property type="entry name" value="GatB"/>
</dbReference>
<dbReference type="InterPro" id="IPR023168">
    <property type="entry name" value="GatB_Yqey_C_2"/>
</dbReference>
<dbReference type="InterPro" id="IPR017958">
    <property type="entry name" value="Gln-tRNA_amidoTrfase_suB_CS"/>
</dbReference>
<dbReference type="InterPro" id="IPR014746">
    <property type="entry name" value="Gln_synth/guanido_kin_cat_dom"/>
</dbReference>
<dbReference type="NCBIfam" id="TIGR00133">
    <property type="entry name" value="gatB"/>
    <property type="match status" value="1"/>
</dbReference>
<dbReference type="NCBIfam" id="NF004012">
    <property type="entry name" value="PRK05477.1-2"/>
    <property type="match status" value="1"/>
</dbReference>
<dbReference type="NCBIfam" id="NF004014">
    <property type="entry name" value="PRK05477.1-4"/>
    <property type="match status" value="1"/>
</dbReference>
<dbReference type="PANTHER" id="PTHR11659">
    <property type="entry name" value="GLUTAMYL-TRNA GLN AMIDOTRANSFERASE SUBUNIT B MITOCHONDRIAL AND PROKARYOTIC PET112-RELATED"/>
    <property type="match status" value="1"/>
</dbReference>
<dbReference type="Pfam" id="PF02934">
    <property type="entry name" value="GatB_N"/>
    <property type="match status" value="1"/>
</dbReference>
<dbReference type="Pfam" id="PF02637">
    <property type="entry name" value="GatB_Yqey"/>
    <property type="match status" value="1"/>
</dbReference>
<dbReference type="SMART" id="SM00845">
    <property type="entry name" value="GatB_Yqey"/>
    <property type="match status" value="1"/>
</dbReference>
<dbReference type="SUPFAM" id="SSF89095">
    <property type="entry name" value="GatB/YqeY motif"/>
    <property type="match status" value="1"/>
</dbReference>
<dbReference type="SUPFAM" id="SSF55931">
    <property type="entry name" value="Glutamine synthetase/guanido kinase"/>
    <property type="match status" value="1"/>
</dbReference>
<dbReference type="PROSITE" id="PS01234">
    <property type="entry name" value="GATB"/>
    <property type="match status" value="1"/>
</dbReference>
<keyword id="KW-0067">ATP-binding</keyword>
<keyword id="KW-0436">Ligase</keyword>
<keyword id="KW-0547">Nucleotide-binding</keyword>
<keyword id="KW-0648">Protein biosynthesis</keyword>
<keyword id="KW-1185">Reference proteome</keyword>
<evidence type="ECO:0000255" key="1">
    <source>
        <dbReference type="HAMAP-Rule" id="MF_00121"/>
    </source>
</evidence>
<proteinExistence type="inferred from homology"/>
<protein>
    <recommendedName>
        <fullName evidence="1">Aspartyl/glutamyl-tRNA(Asn/Gln) amidotransferase subunit B</fullName>
        <shortName evidence="1">Asp/Glu-ADT subunit B</shortName>
        <ecNumber evidence="1">6.3.5.-</ecNumber>
    </recommendedName>
</protein>
<name>GATB_COPPD</name>
<sequence length="474" mass="53379">MNFKFVAGLEIHVQLNTKTKMFCSCPTEGPDIPNTRVCPVCLGYPGTLPVLNREAVVMAIALGKALHGHINNISRFHRKNYFYPDLPKGYQITQGDVPIIENAYLELSTGKKIPIKRIHLEEDAAKSVHVSSTGRLSGAEETLLDFNRSGIPLIEIVTDPVFESPEEAALFVEELQATLRYLGISNAQMELGQLRCDVNVSVELDGKEGTRVEIKNLNSIRAIRQALSYEYNRHVDAYKRGEIIPQETLAFDEKTNQTPPMRTKQTSEDYRYFPEPDLPPLVLTSDLFEEADKYSGSFLEAYKNALQWIGKESEARTLALNKDQYLMYATFAKEGFDTKLLTRIITIDLPNILSEVGKGWNEINQSYISAILNLQQRGEITAAVAKDLLWQAARDIDPIKYAQEHQLLGKKDLDLEQVISEVLEQNPDAVEKYKKGNVNVVSFLLGQVMKKTKGTADPGETRKLLEERLTKLSE</sequence>
<feature type="chain" id="PRO_1000117617" description="Aspartyl/glutamyl-tRNA(Asn/Gln) amidotransferase subunit B">
    <location>
        <begin position="1"/>
        <end position="474"/>
    </location>
</feature>
<accession>B5Y6U9</accession>
<gene>
    <name evidence="1" type="primary">gatB</name>
    <name type="ordered locus">COPRO5265_0125</name>
</gene>
<reference key="1">
    <citation type="submission" date="2008-08" db="EMBL/GenBank/DDBJ databases">
        <title>The complete genome sequence of Coprothermobacter proteolyticus strain ATCC 5245 / DSM 5265 / BT.</title>
        <authorList>
            <person name="Dodson R.J."/>
            <person name="Durkin A.S."/>
            <person name="Wu M."/>
            <person name="Eisen J."/>
            <person name="Sutton G."/>
        </authorList>
    </citation>
    <scope>NUCLEOTIDE SEQUENCE [LARGE SCALE GENOMIC DNA]</scope>
    <source>
        <strain>ATCC 35245 / DSM 5265 / OCM 4 / BT</strain>
    </source>
</reference>